<reference key="1">
    <citation type="journal article" date="2005" name="J. Bacteriol.">
        <title>Insights on evolution of virulence and resistance from the complete genome analysis of an early methicillin-resistant Staphylococcus aureus strain and a biofilm-producing methicillin-resistant Staphylococcus epidermidis strain.</title>
        <authorList>
            <person name="Gill S.R."/>
            <person name="Fouts D.E."/>
            <person name="Archer G.L."/>
            <person name="Mongodin E.F."/>
            <person name="DeBoy R.T."/>
            <person name="Ravel J."/>
            <person name="Paulsen I.T."/>
            <person name="Kolonay J.F."/>
            <person name="Brinkac L.M."/>
            <person name="Beanan M.J."/>
            <person name="Dodson R.J."/>
            <person name="Daugherty S.C."/>
            <person name="Madupu R."/>
            <person name="Angiuoli S.V."/>
            <person name="Durkin A.S."/>
            <person name="Haft D.H."/>
            <person name="Vamathevan J.J."/>
            <person name="Khouri H."/>
            <person name="Utterback T.R."/>
            <person name="Lee C."/>
            <person name="Dimitrov G."/>
            <person name="Jiang L."/>
            <person name="Qin H."/>
            <person name="Weidman J."/>
            <person name="Tran K."/>
            <person name="Kang K.H."/>
            <person name="Hance I.R."/>
            <person name="Nelson K.E."/>
            <person name="Fraser C.M."/>
        </authorList>
    </citation>
    <scope>NUCLEOTIDE SEQUENCE [LARGE SCALE GENOMIC DNA]</scope>
    <source>
        <strain>COL</strain>
    </source>
</reference>
<name>FOSB_STAAC</name>
<proteinExistence type="inferred from homology"/>
<comment type="function">
    <text evidence="1">Metallothiol transferase which confers resistance to fosfomycin by catalyzing the addition of a thiol cofactor to fosfomycin. L-cysteine is probably the physiological thiol donor.</text>
</comment>
<comment type="cofactor">
    <cofactor evidence="1">
        <name>Mg(2+)</name>
        <dbReference type="ChEBI" id="CHEBI:18420"/>
    </cofactor>
</comment>
<comment type="subunit">
    <text evidence="1">Homodimer.</text>
</comment>
<comment type="subcellular location">
    <subcellularLocation>
        <location evidence="1">Cytoplasm</location>
    </subcellularLocation>
</comment>
<comment type="similarity">
    <text evidence="1">Belongs to the fosfomycin resistance protein family. FosB subfamily.</text>
</comment>
<accession>Q5HDM4</accession>
<organism>
    <name type="scientific">Staphylococcus aureus (strain COL)</name>
    <dbReference type="NCBI Taxonomy" id="93062"/>
    <lineage>
        <taxon>Bacteria</taxon>
        <taxon>Bacillati</taxon>
        <taxon>Bacillota</taxon>
        <taxon>Bacilli</taxon>
        <taxon>Bacillales</taxon>
        <taxon>Staphylococcaceae</taxon>
        <taxon>Staphylococcus</taxon>
    </lineage>
</organism>
<feature type="chain" id="PRO_0000164034" description="Metallothiol transferase FosB">
    <location>
        <begin position="1"/>
        <end position="139"/>
    </location>
</feature>
<feature type="domain" description="VOC" evidence="2">
    <location>
        <begin position="4"/>
        <end position="119"/>
    </location>
</feature>
<feature type="active site" description="Proton donor/acceptor" evidence="2">
    <location>
        <position position="115"/>
    </location>
</feature>
<feature type="binding site" evidence="1">
    <location>
        <position position="7"/>
    </location>
    <ligand>
        <name>Mg(2+)</name>
        <dbReference type="ChEBI" id="CHEBI:18420"/>
    </ligand>
</feature>
<feature type="binding site" evidence="1">
    <location>
        <position position="66"/>
    </location>
    <ligand>
        <name>Mg(2+)</name>
        <dbReference type="ChEBI" id="CHEBI:18420"/>
    </ligand>
</feature>
<feature type="binding site" evidence="1">
    <location>
        <position position="115"/>
    </location>
    <ligand>
        <name>Mg(2+)</name>
        <dbReference type="ChEBI" id="CHEBI:18420"/>
    </ligand>
</feature>
<protein>
    <recommendedName>
        <fullName evidence="1">Metallothiol transferase FosB</fullName>
        <ecNumber evidence="1">2.5.1.-</ecNumber>
    </recommendedName>
    <alternativeName>
        <fullName evidence="1">Fosfomycin resistance protein</fullName>
    </alternativeName>
</protein>
<evidence type="ECO:0000255" key="1">
    <source>
        <dbReference type="HAMAP-Rule" id="MF_01512"/>
    </source>
</evidence>
<evidence type="ECO:0000255" key="2">
    <source>
        <dbReference type="PROSITE-ProRule" id="PRU01163"/>
    </source>
</evidence>
<keyword id="KW-0046">Antibiotic resistance</keyword>
<keyword id="KW-0963">Cytoplasm</keyword>
<keyword id="KW-0460">Magnesium</keyword>
<keyword id="KW-0479">Metal-binding</keyword>
<keyword id="KW-0808">Transferase</keyword>
<dbReference type="EC" id="2.5.1.-" evidence="1"/>
<dbReference type="EMBL" id="CP000046">
    <property type="protein sequence ID" value="AAW37155.1"/>
    <property type="molecule type" value="Genomic_DNA"/>
</dbReference>
<dbReference type="RefSeq" id="WP_000920239.1">
    <property type="nucleotide sequence ID" value="NZ_JBGOFO010000004.1"/>
</dbReference>
<dbReference type="SMR" id="Q5HDM4"/>
<dbReference type="BindingDB" id="Q5HDM4"/>
<dbReference type="ChEMBL" id="CHEMBL5465385"/>
<dbReference type="KEGG" id="sac:SACOL2326"/>
<dbReference type="HOGENOM" id="CLU_121356_0_0_9"/>
<dbReference type="Proteomes" id="UP000000530">
    <property type="component" value="Chromosome"/>
</dbReference>
<dbReference type="GO" id="GO:0005737">
    <property type="term" value="C:cytoplasm"/>
    <property type="evidence" value="ECO:0007669"/>
    <property type="project" value="UniProtKB-SubCell"/>
</dbReference>
<dbReference type="GO" id="GO:0000287">
    <property type="term" value="F:magnesium ion binding"/>
    <property type="evidence" value="ECO:0007669"/>
    <property type="project" value="UniProtKB-UniRule"/>
</dbReference>
<dbReference type="GO" id="GO:0016765">
    <property type="term" value="F:transferase activity, transferring alkyl or aryl (other than methyl) groups"/>
    <property type="evidence" value="ECO:0007669"/>
    <property type="project" value="UniProtKB-UniRule"/>
</dbReference>
<dbReference type="GO" id="GO:0046677">
    <property type="term" value="P:response to antibiotic"/>
    <property type="evidence" value="ECO:0007669"/>
    <property type="project" value="UniProtKB-UniRule"/>
</dbReference>
<dbReference type="Gene3D" id="3.10.180.10">
    <property type="entry name" value="2,3-Dihydroxybiphenyl 1,2-Dioxygenase, domain 1"/>
    <property type="match status" value="1"/>
</dbReference>
<dbReference type="HAMAP" id="MF_01512">
    <property type="entry name" value="FosB"/>
    <property type="match status" value="1"/>
</dbReference>
<dbReference type="InterPro" id="IPR051332">
    <property type="entry name" value="Fosfomycin_Res_Enzymes"/>
</dbReference>
<dbReference type="InterPro" id="IPR029068">
    <property type="entry name" value="Glyas_Bleomycin-R_OHBP_Dase"/>
</dbReference>
<dbReference type="InterPro" id="IPR004360">
    <property type="entry name" value="Glyas_Fos-R_dOase_dom"/>
</dbReference>
<dbReference type="InterPro" id="IPR022858">
    <property type="entry name" value="Metallothiol_Trafse_FosB"/>
</dbReference>
<dbReference type="InterPro" id="IPR037523">
    <property type="entry name" value="VOC"/>
</dbReference>
<dbReference type="NCBIfam" id="NF000493">
    <property type="entry name" value="Fos_BSH"/>
    <property type="match status" value="1"/>
</dbReference>
<dbReference type="NCBIfam" id="NF003152">
    <property type="entry name" value="PRK04101.1"/>
    <property type="match status" value="1"/>
</dbReference>
<dbReference type="PANTHER" id="PTHR36113:SF6">
    <property type="entry name" value="FOSFOMYCIN RESISTANCE PROTEIN FOSX"/>
    <property type="match status" value="1"/>
</dbReference>
<dbReference type="PANTHER" id="PTHR36113">
    <property type="entry name" value="LYASE, PUTATIVE-RELATED-RELATED"/>
    <property type="match status" value="1"/>
</dbReference>
<dbReference type="Pfam" id="PF00903">
    <property type="entry name" value="Glyoxalase"/>
    <property type="match status" value="1"/>
</dbReference>
<dbReference type="SUPFAM" id="SSF54593">
    <property type="entry name" value="Glyoxalase/Bleomycin resistance protein/Dihydroxybiphenyl dioxygenase"/>
    <property type="match status" value="1"/>
</dbReference>
<dbReference type="PROSITE" id="PS51819">
    <property type="entry name" value="VOC"/>
    <property type="match status" value="1"/>
</dbReference>
<gene>
    <name evidence="1" type="primary">fosB</name>
    <name type="ordered locus">SACOL2326</name>
</gene>
<sequence>MLKSINHICFSVRNLNDSIHFYRDILLGKLLLTGKKTAYFELAGLWIALNEEKDIPRNEIHFSYTHIAFTIDDSEFKYWHQRLKDNNVNILEGRVRDIRDRQSIYFTDPDGHKLELHTGTLENRLNYYKEAKPHMTFYK</sequence>